<evidence type="ECO:0000255" key="1">
    <source>
        <dbReference type="HAMAP-Rule" id="MF_00467"/>
    </source>
</evidence>
<gene>
    <name evidence="1" type="primary">apeB</name>
    <name type="ordered locus">Pput_3989</name>
</gene>
<dbReference type="EC" id="3.4.11.-" evidence="1"/>
<dbReference type="EMBL" id="CP000712">
    <property type="protein sequence ID" value="ABQ80113.1"/>
    <property type="molecule type" value="Genomic_DNA"/>
</dbReference>
<dbReference type="SMR" id="A5W7K3"/>
<dbReference type="KEGG" id="ppf:Pput_3989"/>
<dbReference type="eggNOG" id="COG1362">
    <property type="taxonomic scope" value="Bacteria"/>
</dbReference>
<dbReference type="HOGENOM" id="CLU_019532_2_0_6"/>
<dbReference type="GO" id="GO:0005737">
    <property type="term" value="C:cytoplasm"/>
    <property type="evidence" value="ECO:0007669"/>
    <property type="project" value="UniProtKB-ARBA"/>
</dbReference>
<dbReference type="GO" id="GO:0004177">
    <property type="term" value="F:aminopeptidase activity"/>
    <property type="evidence" value="ECO:0007669"/>
    <property type="project" value="UniProtKB-UniRule"/>
</dbReference>
<dbReference type="GO" id="GO:0008237">
    <property type="term" value="F:metallopeptidase activity"/>
    <property type="evidence" value="ECO:0007669"/>
    <property type="project" value="UniProtKB-UniRule"/>
</dbReference>
<dbReference type="GO" id="GO:0008270">
    <property type="term" value="F:zinc ion binding"/>
    <property type="evidence" value="ECO:0007669"/>
    <property type="project" value="UniProtKB-UniRule"/>
</dbReference>
<dbReference type="GO" id="GO:0006508">
    <property type="term" value="P:proteolysis"/>
    <property type="evidence" value="ECO:0007669"/>
    <property type="project" value="UniProtKB-UniRule"/>
</dbReference>
<dbReference type="CDD" id="cd05658">
    <property type="entry name" value="M18_DAP"/>
    <property type="match status" value="1"/>
</dbReference>
<dbReference type="FunFam" id="2.30.250.10:FF:000003">
    <property type="entry name" value="Probable M18 family aminopeptidase 2"/>
    <property type="match status" value="1"/>
</dbReference>
<dbReference type="Gene3D" id="2.30.250.10">
    <property type="entry name" value="Aminopeptidase i, Domain 2"/>
    <property type="match status" value="1"/>
</dbReference>
<dbReference type="Gene3D" id="3.40.630.10">
    <property type="entry name" value="Zn peptidases"/>
    <property type="match status" value="1"/>
</dbReference>
<dbReference type="HAMAP" id="MF_00467">
    <property type="entry name" value="Aminopeptidase_M18_2"/>
    <property type="match status" value="1"/>
</dbReference>
<dbReference type="InterPro" id="IPR022984">
    <property type="entry name" value="M18_aminopeptidase_2"/>
</dbReference>
<dbReference type="InterPro" id="IPR001948">
    <property type="entry name" value="Peptidase_M18"/>
</dbReference>
<dbReference type="InterPro" id="IPR023358">
    <property type="entry name" value="Peptidase_M18_dom2"/>
</dbReference>
<dbReference type="NCBIfam" id="NF002759">
    <property type="entry name" value="PRK02813.1"/>
    <property type="match status" value="1"/>
</dbReference>
<dbReference type="PANTHER" id="PTHR28570">
    <property type="entry name" value="ASPARTYL AMINOPEPTIDASE"/>
    <property type="match status" value="1"/>
</dbReference>
<dbReference type="PANTHER" id="PTHR28570:SF3">
    <property type="entry name" value="ASPARTYL AMINOPEPTIDASE"/>
    <property type="match status" value="1"/>
</dbReference>
<dbReference type="Pfam" id="PF02127">
    <property type="entry name" value="Peptidase_M18"/>
    <property type="match status" value="1"/>
</dbReference>
<dbReference type="PRINTS" id="PR00932">
    <property type="entry name" value="AMINO1PTASE"/>
</dbReference>
<dbReference type="SUPFAM" id="SSF101821">
    <property type="entry name" value="Aminopeptidase/glucanase lid domain"/>
    <property type="match status" value="1"/>
</dbReference>
<dbReference type="SUPFAM" id="SSF53187">
    <property type="entry name" value="Zn-dependent exopeptidases"/>
    <property type="match status" value="1"/>
</dbReference>
<comment type="cofactor">
    <cofactor evidence="1">
        <name>Zn(2+)</name>
        <dbReference type="ChEBI" id="CHEBI:29105"/>
    </cofactor>
</comment>
<comment type="similarity">
    <text evidence="1">Belongs to the peptidase M18 family.</text>
</comment>
<keyword id="KW-0031">Aminopeptidase</keyword>
<keyword id="KW-0378">Hydrolase</keyword>
<keyword id="KW-0479">Metal-binding</keyword>
<keyword id="KW-0482">Metalloprotease</keyword>
<keyword id="KW-0645">Protease</keyword>
<keyword id="KW-0862">Zinc</keyword>
<protein>
    <recommendedName>
        <fullName evidence="1">Probable M18 family aminopeptidase 2</fullName>
        <ecNumber evidence="1">3.4.11.-</ecNumber>
    </recommendedName>
</protein>
<feature type="chain" id="PRO_1000013705" description="Probable M18 family aminopeptidase 2">
    <location>
        <begin position="1"/>
        <end position="429"/>
    </location>
</feature>
<feature type="binding site" evidence="1">
    <location>
        <position position="82"/>
    </location>
    <ligand>
        <name>Zn(2+)</name>
        <dbReference type="ChEBI" id="CHEBI:29105"/>
    </ligand>
</feature>
<feature type="binding site" evidence="1">
    <location>
        <position position="156"/>
    </location>
    <ligand>
        <name>Zn(2+)</name>
        <dbReference type="ChEBI" id="CHEBI:29105"/>
    </ligand>
</feature>
<feature type="binding site" evidence="1">
    <location>
        <position position="401"/>
    </location>
    <ligand>
        <name>Zn(2+)</name>
        <dbReference type="ChEBI" id="CHEBI:29105"/>
    </ligand>
</feature>
<sequence length="429" mass="47020">MRDALNTGLIEFLKASPTPFHATASLVQRLEAAGYKRLDERDSWDPETGGRYYVTRNDSSIIAIKLGKQSPLLNGIRMVGAHTDSPCLRVKPQPELQRQGFLQLGVEVYGGALLAPWFDRDLSLAGRVTYRRDGKVESQLIDFKLPIAIIPNLAIHLNRTANEGWAINPQNELPPILAQVAGDERIDFRALLTEQLAREHELIADVVLDYELSFYDTQDAALIGLNGDFIAGARLDNLLSCYAGLQALLAADSDETCVLVCNDHEEVGSCSACGADGPMLEQTLQRLLPDGDTYVRTLQRSLMVSADNAHGVHPNYADKHDGNHGPKLNAGPVIKVNNNQRYATNSETAGFFRHLCMAEEVPVQSFVVRSDMGCGSTIGPITASHLGVRTVDIGLPTFAMHSIRELCGSHDLAHLVKVLTAFYRSRELP</sequence>
<proteinExistence type="inferred from homology"/>
<organism>
    <name type="scientific">Pseudomonas putida (strain ATCC 700007 / DSM 6899 / JCM 31910 / BCRC 17059 / LMG 24140 / F1)</name>
    <dbReference type="NCBI Taxonomy" id="351746"/>
    <lineage>
        <taxon>Bacteria</taxon>
        <taxon>Pseudomonadati</taxon>
        <taxon>Pseudomonadota</taxon>
        <taxon>Gammaproteobacteria</taxon>
        <taxon>Pseudomonadales</taxon>
        <taxon>Pseudomonadaceae</taxon>
        <taxon>Pseudomonas</taxon>
    </lineage>
</organism>
<accession>A5W7K3</accession>
<name>APEB_PSEP1</name>
<reference key="1">
    <citation type="submission" date="2007-05" db="EMBL/GenBank/DDBJ databases">
        <title>Complete sequence of Pseudomonas putida F1.</title>
        <authorList>
            <consortium name="US DOE Joint Genome Institute"/>
            <person name="Copeland A."/>
            <person name="Lucas S."/>
            <person name="Lapidus A."/>
            <person name="Barry K."/>
            <person name="Detter J.C."/>
            <person name="Glavina del Rio T."/>
            <person name="Hammon N."/>
            <person name="Israni S."/>
            <person name="Dalin E."/>
            <person name="Tice H."/>
            <person name="Pitluck S."/>
            <person name="Chain P."/>
            <person name="Malfatti S."/>
            <person name="Shin M."/>
            <person name="Vergez L."/>
            <person name="Schmutz J."/>
            <person name="Larimer F."/>
            <person name="Land M."/>
            <person name="Hauser L."/>
            <person name="Kyrpides N."/>
            <person name="Lykidis A."/>
            <person name="Parales R."/>
            <person name="Richardson P."/>
        </authorList>
    </citation>
    <scope>NUCLEOTIDE SEQUENCE [LARGE SCALE GENOMIC DNA]</scope>
    <source>
        <strain>ATCC 700007 / DSM 6899 / JCM 31910 / BCRC 17059 / LMG 24140 / F1</strain>
    </source>
</reference>